<gene>
    <name evidence="7 10" type="primary">EME2</name>
</gene>
<protein>
    <recommendedName>
        <fullName evidence="9">Structure-specific endonuclease subunit EME2</fullName>
    </recommendedName>
    <alternativeName>
        <fullName evidence="10">Essential meiotic structure-specific endonuclease subunit 2</fullName>
    </alternativeName>
</protein>
<feature type="chain" id="PRO_0000317373" description="Structure-specific endonuclease subunit EME2">
    <location>
        <begin position="1"/>
        <end position="379"/>
    </location>
</feature>
<feature type="region of interest" description="Disordered" evidence="1">
    <location>
        <begin position="1"/>
        <end position="55"/>
    </location>
</feature>
<feature type="region of interest" description="Nuclease-like domain; forms the post-nick DNA binding interface and is involved in DNA recognition and bending" evidence="5">
    <location>
        <begin position="50"/>
        <end position="266"/>
    </location>
</feature>
<feature type="region of interest" description="Helix-hairpin-helix (2HhH); forms the pre-nick DNA binding interface and is involved in DNA recognition and bending" evidence="5">
    <location>
        <begin position="288"/>
        <end position="379"/>
    </location>
</feature>
<feature type="splice variant" id="VSP_030938" description="In isoform 2." evidence="6">
    <location>
        <begin position="1"/>
        <end position="134"/>
    </location>
</feature>
<feature type="splice variant" id="VSP_030939" description="In isoform 2." evidence="6">
    <original>AAGEQELLLLLEPEEFLQGVATLTQISGPTHWVPWISPETTARPHLAVIGLDAYLW</original>
    <variation>MPTAGLAGTGVQGRWAHFWGCCGTADPTSPGGLWQRPSSGRAGPMGSGEEWSPLLR</variation>
    <location>
        <begin position="135"/>
        <end position="190"/>
    </location>
</feature>
<feature type="mutagenesis site" description="No effect on cleavage of 3 prime flaps, nHJs and 5 prime flaps; when associated with E-295." evidence="5">
    <original>R</original>
    <variation>E</variation>
    <location>
        <position position="294"/>
    </location>
</feature>
<feature type="mutagenesis site" description="No effect on cleavage of 3 prime flaps, nHJs and 5 prime flaps; when associated with E-294." evidence="5">
    <original>R</original>
    <variation>E</variation>
    <location>
        <position position="295"/>
    </location>
</feature>
<feature type="mutagenesis site" description="Decreased cleavage of 3 prime flaps, nHJs and 5 prime flaps; when associated with E-353." evidence="5">
    <original>R</original>
    <variation>E</variation>
    <location>
        <position position="352"/>
    </location>
</feature>
<feature type="mutagenesis site" description="Decreased cleavage of 3 prime flaps, nHJs and 5 prime flaps; when associated with E-353." evidence="5">
    <original>R</original>
    <variation>E</variation>
    <location>
        <position position="353"/>
    </location>
</feature>
<feature type="mutagenesis site" description="Decreased cleavage of 3 prime flaps, nHJs and 5 prime flaps; when associated with E-361." evidence="5">
    <original>R</original>
    <variation>E</variation>
    <location>
        <position position="360"/>
    </location>
</feature>
<feature type="mutagenesis site" description="Decreased cleavage of 3 prime flaps, nHJs and 5 prime flaps; when associated with E-360." evidence="5">
    <original>R</original>
    <variation>E</variation>
    <location>
        <position position="361"/>
    </location>
</feature>
<feature type="turn" evidence="12">
    <location>
        <begin position="70"/>
        <end position="72"/>
    </location>
</feature>
<feature type="strand" evidence="12">
    <location>
        <begin position="73"/>
        <end position="80"/>
    </location>
</feature>
<feature type="helix" evidence="12">
    <location>
        <begin position="82"/>
        <end position="86"/>
    </location>
</feature>
<feature type="helix" evidence="12">
    <location>
        <begin position="88"/>
        <end position="90"/>
    </location>
</feature>
<feature type="helix" evidence="12">
    <location>
        <begin position="91"/>
        <end position="97"/>
    </location>
</feature>
<feature type="strand" evidence="12">
    <location>
        <begin position="102"/>
        <end position="106"/>
    </location>
</feature>
<feature type="strand" evidence="12">
    <location>
        <begin position="110"/>
        <end position="119"/>
    </location>
</feature>
<feature type="strand" evidence="12">
    <location>
        <begin position="141"/>
        <end position="145"/>
    </location>
</feature>
<feature type="helix" evidence="12">
    <location>
        <begin position="147"/>
        <end position="156"/>
    </location>
</feature>
<feature type="strand" evidence="12">
    <location>
        <begin position="178"/>
        <end position="184"/>
    </location>
</feature>
<feature type="helix" evidence="12">
    <location>
        <begin position="185"/>
        <end position="192"/>
    </location>
</feature>
<feature type="helix" evidence="12">
    <location>
        <begin position="216"/>
        <end position="230"/>
    </location>
</feature>
<feature type="strand" evidence="12">
    <location>
        <begin position="234"/>
        <end position="239"/>
    </location>
</feature>
<feature type="helix" evidence="12">
    <location>
        <begin position="240"/>
        <end position="264"/>
    </location>
</feature>
<feature type="strand" evidence="12">
    <location>
        <begin position="265"/>
        <end position="267"/>
    </location>
</feature>
<feature type="helix" evidence="12">
    <location>
        <begin position="289"/>
        <end position="298"/>
    </location>
</feature>
<feature type="helix" evidence="12">
    <location>
        <begin position="305"/>
        <end position="314"/>
    </location>
</feature>
<feature type="helix" evidence="12">
    <location>
        <begin position="319"/>
        <end position="326"/>
    </location>
</feature>
<feature type="helix" evidence="12">
    <location>
        <begin position="331"/>
        <end position="335"/>
    </location>
</feature>
<feature type="turn" evidence="12">
    <location>
        <begin position="336"/>
        <end position="340"/>
    </location>
</feature>
<feature type="strand" evidence="12">
    <location>
        <begin position="347"/>
        <end position="350"/>
    </location>
</feature>
<feature type="helix" evidence="12">
    <location>
        <begin position="356"/>
        <end position="366"/>
    </location>
</feature>
<accession>A4GXA9</accession>
<accession>Q8TEP2</accession>
<accession>Q96RY3</accession>
<name>EME2_HUMAN</name>
<dbReference type="EMBL" id="EF452422">
    <property type="protein sequence ID" value="ABO21766.1"/>
    <property type="molecule type" value="mRNA"/>
</dbReference>
<dbReference type="EMBL" id="AK074080">
    <property type="protein sequence ID" value="BAB84906.2"/>
    <property type="status" value="ALT_INIT"/>
    <property type="molecule type" value="mRNA"/>
</dbReference>
<dbReference type="EMBL" id="AE006639">
    <property type="protein sequence ID" value="AAK61292.1"/>
    <property type="status" value="ALT_SEQ"/>
    <property type="molecule type" value="Genomic_DNA"/>
</dbReference>
<dbReference type="CCDS" id="CCDS58404.1">
    <molecule id="A4GXA9-1"/>
</dbReference>
<dbReference type="RefSeq" id="NP_001244299.1">
    <molecule id="A4GXA9-1"/>
    <property type="nucleotide sequence ID" value="NM_001257370.2"/>
</dbReference>
<dbReference type="PDB" id="7F6L">
    <property type="method" value="X-ray"/>
    <property type="resolution" value="3.20 A"/>
    <property type="chains" value="B=1-379"/>
</dbReference>
<dbReference type="PDBsum" id="7F6L"/>
<dbReference type="SMR" id="A4GXA9"/>
<dbReference type="BioGRID" id="128252">
    <property type="interactions" value="7"/>
</dbReference>
<dbReference type="ComplexPortal" id="CPX-586">
    <property type="entry name" value="MUS81-EME2 structure-specific endonuclease complex"/>
</dbReference>
<dbReference type="FunCoup" id="A4GXA9">
    <property type="interactions" value="85"/>
</dbReference>
<dbReference type="IntAct" id="A4GXA9">
    <property type="interactions" value="2"/>
</dbReference>
<dbReference type="MINT" id="A4GXA9"/>
<dbReference type="STRING" id="9606.ENSP00000457353"/>
<dbReference type="iPTMnet" id="A4GXA9"/>
<dbReference type="PhosphoSitePlus" id="A4GXA9"/>
<dbReference type="BioMuta" id="EME2"/>
<dbReference type="PaxDb" id="9606-ENSP00000457353"/>
<dbReference type="PeptideAtlas" id="A4GXA9"/>
<dbReference type="ProteomicsDB" id="678">
    <molecule id="A4GXA9-2"/>
</dbReference>
<dbReference type="Antibodypedia" id="65797">
    <property type="antibodies" value="86 antibodies from 15 providers"/>
</dbReference>
<dbReference type="DNASU" id="197342"/>
<dbReference type="Ensembl" id="ENST00000568449.7">
    <molecule id="A4GXA9-1"/>
    <property type="protein sequence ID" value="ENSP00000457353.1"/>
    <property type="gene ID" value="ENSG00000197774.14"/>
</dbReference>
<dbReference type="GeneID" id="197342"/>
<dbReference type="KEGG" id="hsa:197342"/>
<dbReference type="MANE-Select" id="ENST00000568449.7">
    <property type="protein sequence ID" value="ENSP00000457353.1"/>
    <property type="RefSeq nucleotide sequence ID" value="NM_001257370.2"/>
    <property type="RefSeq protein sequence ID" value="NP_001244299.1"/>
</dbReference>
<dbReference type="UCSC" id="uc010brw.2">
    <molecule id="A4GXA9-1"/>
    <property type="organism name" value="human"/>
</dbReference>
<dbReference type="AGR" id="HGNC:27289"/>
<dbReference type="CTD" id="197342"/>
<dbReference type="DisGeNET" id="197342"/>
<dbReference type="GeneCards" id="EME2"/>
<dbReference type="HGNC" id="HGNC:27289">
    <property type="gene designation" value="EME2"/>
</dbReference>
<dbReference type="HPA" id="ENSG00000197774">
    <property type="expression patterns" value="Low tissue specificity"/>
</dbReference>
<dbReference type="MalaCards" id="EME2"/>
<dbReference type="MIM" id="610886">
    <property type="type" value="gene"/>
</dbReference>
<dbReference type="neXtProt" id="NX_A4GXA9"/>
<dbReference type="OpenTargets" id="ENSG00000197774"/>
<dbReference type="PharmGKB" id="PA134863517"/>
<dbReference type="VEuPathDB" id="HostDB:ENSG00000197774"/>
<dbReference type="eggNOG" id="ENOG502RQYN">
    <property type="taxonomic scope" value="Eukaryota"/>
</dbReference>
<dbReference type="GeneTree" id="ENSGT00530000063937"/>
<dbReference type="HOGENOM" id="CLU_034099_1_0_1"/>
<dbReference type="InParanoid" id="A4GXA9"/>
<dbReference type="OMA" id="VWAAGEQ"/>
<dbReference type="OrthoDB" id="343092at2759"/>
<dbReference type="PAN-GO" id="A4GXA9">
    <property type="GO annotations" value="5 GO annotations based on evolutionary models"/>
</dbReference>
<dbReference type="TreeFam" id="TF325310"/>
<dbReference type="PathwayCommons" id="A4GXA9"/>
<dbReference type="Reactome" id="R-HSA-5693568">
    <property type="pathway name" value="Resolution of D-loop Structures through Holliday Junction Intermediates"/>
</dbReference>
<dbReference type="Reactome" id="R-HSA-6783310">
    <property type="pathway name" value="Fanconi Anemia Pathway"/>
</dbReference>
<dbReference type="SignaLink" id="A4GXA9"/>
<dbReference type="BioGRID-ORCS" id="197342">
    <property type="hits" value="22 hits in 1156 CRISPR screens"/>
</dbReference>
<dbReference type="ChiTaRS" id="EME2">
    <property type="organism name" value="human"/>
</dbReference>
<dbReference type="GenomeRNAi" id="197342"/>
<dbReference type="Pharos" id="A4GXA9">
    <property type="development level" value="Tbio"/>
</dbReference>
<dbReference type="PRO" id="PR:A4GXA9"/>
<dbReference type="Proteomes" id="UP000005640">
    <property type="component" value="Chromosome 16"/>
</dbReference>
<dbReference type="RNAct" id="A4GXA9">
    <property type="molecule type" value="protein"/>
</dbReference>
<dbReference type="Bgee" id="ENSG00000197774">
    <property type="expression patterns" value="Expressed in oviduct epithelium and 159 other cell types or tissues"/>
</dbReference>
<dbReference type="ExpressionAtlas" id="A4GXA9">
    <property type="expression patterns" value="baseline and differential"/>
</dbReference>
<dbReference type="GO" id="GO:1905347">
    <property type="term" value="C:endodeoxyribonuclease complex"/>
    <property type="evidence" value="ECO:0000314"/>
    <property type="project" value="UniProtKB"/>
</dbReference>
<dbReference type="GO" id="GO:0048476">
    <property type="term" value="C:Holliday junction resolvase complex"/>
    <property type="evidence" value="ECO:0000318"/>
    <property type="project" value="GO_Central"/>
</dbReference>
<dbReference type="GO" id="GO:0000228">
    <property type="term" value="C:nuclear chromosome"/>
    <property type="evidence" value="ECO:0000314"/>
    <property type="project" value="UniProtKB"/>
</dbReference>
<dbReference type="GO" id="GO:0043596">
    <property type="term" value="C:nuclear replication fork"/>
    <property type="evidence" value="ECO:0000303"/>
    <property type="project" value="ComplexPortal"/>
</dbReference>
<dbReference type="GO" id="GO:0003677">
    <property type="term" value="F:DNA binding"/>
    <property type="evidence" value="ECO:0007669"/>
    <property type="project" value="InterPro"/>
</dbReference>
<dbReference type="GO" id="GO:0004519">
    <property type="term" value="F:endonuclease activity"/>
    <property type="evidence" value="ECO:0007669"/>
    <property type="project" value="UniProtKB-KW"/>
</dbReference>
<dbReference type="GO" id="GO:0006302">
    <property type="term" value="P:double-strand break repair"/>
    <property type="evidence" value="ECO:0000314"/>
    <property type="project" value="ComplexPortal"/>
</dbReference>
<dbReference type="GO" id="GO:0031573">
    <property type="term" value="P:mitotic intra-S DNA damage checkpoint signaling"/>
    <property type="evidence" value="ECO:0000318"/>
    <property type="project" value="GO_Central"/>
</dbReference>
<dbReference type="GO" id="GO:0031297">
    <property type="term" value="P:replication fork processing"/>
    <property type="evidence" value="ECO:0000314"/>
    <property type="project" value="ComplexPortal"/>
</dbReference>
<dbReference type="GO" id="GO:0000712">
    <property type="term" value="P:resolution of meiotic recombination intermediates"/>
    <property type="evidence" value="ECO:0000318"/>
    <property type="project" value="GO_Central"/>
</dbReference>
<dbReference type="GO" id="GO:0000723">
    <property type="term" value="P:telomere maintenance"/>
    <property type="evidence" value="ECO:0000315"/>
    <property type="project" value="UniProtKB"/>
</dbReference>
<dbReference type="CDD" id="cd20082">
    <property type="entry name" value="XPF_nuclease_EME2"/>
    <property type="match status" value="1"/>
</dbReference>
<dbReference type="FunFam" id="1.10.150.670:FF:000002">
    <property type="entry name" value="Crossover junction endonuclease EME1"/>
    <property type="match status" value="1"/>
</dbReference>
<dbReference type="FunFam" id="3.40.50.10130:FF:000007">
    <property type="entry name" value="Probable crossover junction endonuclease EME2"/>
    <property type="match status" value="1"/>
</dbReference>
<dbReference type="Gene3D" id="3.40.50.10130">
    <property type="match status" value="1"/>
</dbReference>
<dbReference type="Gene3D" id="1.10.150.670">
    <property type="entry name" value="Crossover junction endonuclease EME1, DNA-binding domain"/>
    <property type="match status" value="1"/>
</dbReference>
<dbReference type="InterPro" id="IPR042530">
    <property type="entry name" value="EME1/EME2_C"/>
</dbReference>
<dbReference type="InterPro" id="IPR006166">
    <property type="entry name" value="ERCC4_domain"/>
</dbReference>
<dbReference type="InterPro" id="IPR033310">
    <property type="entry name" value="Mms4/EME1/EME2"/>
</dbReference>
<dbReference type="InterPro" id="IPR047523">
    <property type="entry name" value="XPF_nuclease_EME2"/>
</dbReference>
<dbReference type="PANTHER" id="PTHR21077:SF6">
    <property type="entry name" value="CROSSOVER JUNCTION ENDONUCLEASE EME2-RELATED"/>
    <property type="match status" value="1"/>
</dbReference>
<dbReference type="PANTHER" id="PTHR21077">
    <property type="entry name" value="EME1 PROTEIN"/>
    <property type="match status" value="1"/>
</dbReference>
<dbReference type="Pfam" id="PF21292">
    <property type="entry name" value="EME1-MUS81_C"/>
    <property type="match status" value="1"/>
</dbReference>
<dbReference type="Pfam" id="PF02732">
    <property type="entry name" value="ERCC4"/>
    <property type="match status" value="1"/>
</dbReference>
<dbReference type="SMART" id="SM00891">
    <property type="entry name" value="ERCC4"/>
    <property type="match status" value="1"/>
</dbReference>
<reference key="1">
    <citation type="journal article" date="2007" name="Mol. Cell">
        <title>Identification of FAAP24, a Fanconi anemia core complex protein that interacts with FANCM.</title>
        <authorList>
            <person name="Ciccia A."/>
            <person name="Ling C."/>
            <person name="Coulthard R."/>
            <person name="Yan Z."/>
            <person name="Xue Y."/>
            <person name="Meetei A.R."/>
            <person name="Laghmani el H."/>
            <person name="Joenje H."/>
            <person name="McDonald N."/>
            <person name="de Winter J.P."/>
            <person name="Wang W."/>
            <person name="West S.C."/>
        </authorList>
    </citation>
    <scope>NUCLEOTIDE SEQUENCE [MRNA] (ISOFORM 1)</scope>
    <scope>FUNCTION</scope>
    <scope>INTERACTION WITH MUS81</scope>
</reference>
<reference key="2">
    <citation type="journal article" date="2003" name="DNA Res.">
        <title>Characterization of long cDNA clones from human adult spleen. II. The complete sequences of 81 cDNA clones.</title>
        <authorList>
            <person name="Jikuya H."/>
            <person name="Takano J."/>
            <person name="Kikuno R."/>
            <person name="Hirosawa M."/>
            <person name="Nagase T."/>
            <person name="Nomura N."/>
            <person name="Ohara O."/>
        </authorList>
    </citation>
    <scope>NUCLEOTIDE SEQUENCE [LARGE SCALE MRNA] (ISOFORM 2)</scope>
    <source>
        <tissue>Spleen</tissue>
    </source>
</reference>
<reference key="3">
    <citation type="journal article" date="2001" name="Hum. Mol. Genet.">
        <title>Sequence, structure and pathology of the fully annotated terminal 2 Mb of the short arm of human chromosome 16.</title>
        <authorList>
            <person name="Daniels R.J."/>
            <person name="Peden J.F."/>
            <person name="Lloyd C."/>
            <person name="Horsley S.W."/>
            <person name="Clark K."/>
            <person name="Tufarelli C."/>
            <person name="Kearney L."/>
            <person name="Buckle V.J."/>
            <person name="Doggett N.A."/>
            <person name="Flint J."/>
            <person name="Higgs D.R."/>
        </authorList>
    </citation>
    <scope>NUCLEOTIDE SEQUENCE [LARGE SCALE GENOMIC DNA]</scope>
</reference>
<reference key="4">
    <citation type="journal article" date="2014" name="Cell Rep.">
        <title>MUS81-EME2 promotes replication fork restart.</title>
        <authorList>
            <person name="Pepe A."/>
            <person name="West S.C."/>
        </authorList>
    </citation>
    <scope>FUNCTION</scope>
    <scope>SUBUNIT</scope>
</reference>
<reference key="5">
    <citation type="journal article" date="2014" name="Nucleic Acids Res.">
        <title>Substrate specificity of the MUS81-EME2 structure selective endonuclease.</title>
        <authorList>
            <person name="Pepe A."/>
            <person name="West S.C."/>
        </authorList>
    </citation>
    <scope>FUNCTION</scope>
</reference>
<reference evidence="11" key="6">
    <citation type="journal article" date="2022" name="Structure">
        <title>Crystal structure of the human MUS81-EME2 complex.</title>
        <authorList>
            <person name="Hua Z."/>
            <person name="Fang Q."/>
            <person name="Zhang D."/>
            <person name="Luo Z."/>
            <person name="Yuan C."/>
            <person name="Lin Z."/>
        </authorList>
    </citation>
    <scope>X-RAY CRYSTALLOGRAPHY (3.20 ANGSTROMS)</scope>
    <scope>FUNCTION</scope>
    <scope>SUBSTRATE SPECIFICITY</scope>
    <scope>SUBUNIT</scope>
    <scope>SUBCELLULAR LOCATION</scope>
    <scope>MUTAGENESIS OF ARG-294; ARG-295; ARG-352; ARG-353; ARG-360 AND ARG-361</scope>
</reference>
<sequence>MARVGPGRAGVSCQGRGRGRGGSGQRRPPTWEISDSDAEDSAGSEAAARARDPAGERRAAAEALRLLRPEQVLKRLAVCVDTAILEDAGADVLMEALEALGCECRIEPQRPARSLRWTRASPDPCPRSLPPEVWAAGEQELLLLLEPEEFLQGVATLTQISGPTHWVPWISPETTARPHLAVIGLDAYLWSRQHVSRGTQQPESPKVAGAEVAVSWPEVEEALVLLQLWANLDVLLVASWQELSRHVCAVTKALAQYPLKQYRESQAFSFCTAGRWAAGEPVARDGAGLQAAWRRQIRQFSRVSPAVADAVVTAFPSPRLLQQALEACSTERERMGLLADLPVPPSEGGRPRRVGPDLSRRICLFLTTANPDLLLDLGS</sequence>
<organism>
    <name type="scientific">Homo sapiens</name>
    <name type="common">Human</name>
    <dbReference type="NCBI Taxonomy" id="9606"/>
    <lineage>
        <taxon>Eukaryota</taxon>
        <taxon>Metazoa</taxon>
        <taxon>Chordata</taxon>
        <taxon>Craniata</taxon>
        <taxon>Vertebrata</taxon>
        <taxon>Euteleostomi</taxon>
        <taxon>Mammalia</taxon>
        <taxon>Eutheria</taxon>
        <taxon>Euarchontoglires</taxon>
        <taxon>Primates</taxon>
        <taxon>Haplorrhini</taxon>
        <taxon>Catarrhini</taxon>
        <taxon>Hominidae</taxon>
        <taxon>Homo</taxon>
    </lineage>
</organism>
<keyword id="KW-0002">3D-structure</keyword>
<keyword id="KW-0025">Alternative splicing</keyword>
<keyword id="KW-0227">DNA damage</keyword>
<keyword id="KW-0233">DNA recombination</keyword>
<keyword id="KW-0234">DNA repair</keyword>
<keyword id="KW-0539">Nucleus</keyword>
<keyword id="KW-1267">Proteomics identification</keyword>
<keyword id="KW-1185">Reference proteome</keyword>
<evidence type="ECO:0000256" key="1">
    <source>
        <dbReference type="SAM" id="MobiDB-lite"/>
    </source>
</evidence>
<evidence type="ECO:0000269" key="2">
    <source>
    </source>
</evidence>
<evidence type="ECO:0000269" key="3">
    <source>
    </source>
</evidence>
<evidence type="ECO:0000269" key="4">
    <source>
    </source>
</evidence>
<evidence type="ECO:0000269" key="5">
    <source>
    </source>
</evidence>
<evidence type="ECO:0000303" key="6">
    <source>
    </source>
</evidence>
<evidence type="ECO:0000303" key="7">
    <source>
    </source>
</evidence>
<evidence type="ECO:0000305" key="8"/>
<evidence type="ECO:0000305" key="9">
    <source>
    </source>
</evidence>
<evidence type="ECO:0000312" key="10">
    <source>
        <dbReference type="HGNC" id="HGNC:27289"/>
    </source>
</evidence>
<evidence type="ECO:0007744" key="11">
    <source>
        <dbReference type="PDB" id="7F6L"/>
    </source>
</evidence>
<evidence type="ECO:0007829" key="12">
    <source>
        <dbReference type="PDB" id="7F6L"/>
    </source>
</evidence>
<proteinExistence type="evidence at protein level"/>
<comment type="function">
    <text evidence="2 3 4 5">Non-catalytic subunit of the structure-specific, heterodimeric DNA endonuclease MUS81-EME2 which is involved in the maintenance of genome stability. In the complex, EME2 is required for DNA cleavage, participating in DNA recognition and bending (PubMed:17289582, PubMed:24371268, PubMed:24813886, PubMed:35290797). MUS81-EME2 cleaves 3'-flaps and nicked Holliday junctions, and exhibit limited endonuclease activity with 5' flaps and nicked double-stranded DNAs (PubMed:24371268). MUS81-EME2 which is active during the replication of DNA is more specifically involved in replication fork processing (PubMed:17289582, PubMed:24813886). Replication forks frequently encounter obstacles to their passage, including DNA base lesions, DNA interstrand cross-links, difficult-to-replicate sequences, transcription bubbles, or tightly bound proteins. One mechanism for the restart of a stalled replication fork involves nucleolytic cleavage mediated by the MUS81-EME2 endonuclease. By acting upon the stalled fork, MUS81-EME2 generates a DNA double-strand break (DSB) that can be repaired by homologous recombination, leading to the restoration of an active fork (PubMed:24813886). MUS81-EME2 could also function in telomere maintenance (PubMed:24813886).</text>
</comment>
<comment type="subunit">
    <text evidence="2 4 5">Part of the heterodimeric MUS81-EME2 complex; the complex forms specifically during the DNA replication phase of the cell cycle.</text>
</comment>
<comment type="interaction">
    <interactant intactId="EBI-7838486">
        <id>A4GXA9</id>
    </interactant>
    <interactant intactId="EBI-2370806">
        <id>Q96NY9</id>
        <label>MUS81</label>
    </interactant>
    <organismsDiffer>false</organismsDiffer>
    <experiments>3</experiments>
</comment>
<comment type="subcellular location">
    <subcellularLocation>
        <location evidence="9">Nucleus</location>
    </subcellularLocation>
</comment>
<comment type="alternative products">
    <event type="alternative splicing"/>
    <isoform>
        <id>A4GXA9-1</id>
        <name>1</name>
        <sequence type="displayed"/>
    </isoform>
    <isoform>
        <id>A4GXA9-2</id>
        <name>2</name>
        <sequence type="described" ref="VSP_030938 VSP_030939"/>
    </isoform>
</comment>
<comment type="similarity">
    <text evidence="8">Belongs to the EME1/MMS4 family.</text>
</comment>
<comment type="sequence caution" evidence="8">
    <conflict type="erroneous gene model prediction">
        <sequence resource="EMBL-CDS" id="AAK61292"/>
    </conflict>
</comment>
<comment type="sequence caution" evidence="8">
    <conflict type="erroneous initiation">
        <sequence resource="EMBL-CDS" id="BAB84906"/>
    </conflict>
    <text>Extended N-terminus.</text>
</comment>